<reference key="1">
    <citation type="journal article" date="2004" name="Nucleic Acids Res.">
        <title>The genome sequence of Bacillus cereus ATCC 10987 reveals metabolic adaptations and a large plasmid related to Bacillus anthracis pXO1.</title>
        <authorList>
            <person name="Rasko D.A."/>
            <person name="Ravel J."/>
            <person name="Oekstad O.A."/>
            <person name="Helgason E."/>
            <person name="Cer R.Z."/>
            <person name="Jiang L."/>
            <person name="Shores K.A."/>
            <person name="Fouts D.E."/>
            <person name="Tourasse N.J."/>
            <person name="Angiuoli S.V."/>
            <person name="Kolonay J.F."/>
            <person name="Nelson W.C."/>
            <person name="Kolstoe A.-B."/>
            <person name="Fraser C.M."/>
            <person name="Read T.D."/>
        </authorList>
    </citation>
    <scope>NUCLEOTIDE SEQUENCE [LARGE SCALE GENOMIC DNA]</scope>
    <source>
        <strain>ATCC 10987 / NRS 248</strain>
    </source>
</reference>
<name>RIBBA_BACC1</name>
<sequence>MFHRIEEALEDLKQGKVVIVCDDENRENEGDFIALAEYITPETINFMITHGRGLVCVPITEGYAERLQLEPMVAHNTDSHHTAFTVSIDHVSTTTGISAHERATTIREMLNPASKGADFNRPGHIFPLIAKEGGVLRRAGHTEAAVDLAQLCGAEPAGVICEIINEDGTMARVPDLLQCAKQFDIKMITIEDLIAYRRHHETLVTREVEITLPTDFGTFHAIGYSNSLDTKEHIALVKGDISTGEPVLVRVHSECLTGDVFGSCRCDCGPQLHAALAQIEREGKGVLLYMRQEGRGIGLLNKLRAYKLQEEGFDTVEANEKLGFPADLRDYGIGAQILKDLGLQHLRLLTNNPRKIAGLQGYDLEVIERVPLQMPAKEENKTYLQTKVNKLGHLLNL</sequence>
<gene>
    <name evidence="1" type="primary">ribBA</name>
    <name type="ordered locus">BCE_4181</name>
</gene>
<feature type="chain" id="PRO_1000067416" description="Riboflavin biosynthesis protein RibBA">
    <location>
        <begin position="1"/>
        <end position="397"/>
    </location>
</feature>
<feature type="region of interest" description="DHBP synthase">
    <location>
        <begin position="1"/>
        <end position="199"/>
    </location>
</feature>
<feature type="region of interest" description="GTP cyclohydrolase II">
    <location>
        <begin position="200"/>
        <end position="397"/>
    </location>
</feature>
<feature type="active site" description="Proton acceptor; for GTP cyclohydrolase activity" evidence="1">
    <location>
        <position position="327"/>
    </location>
</feature>
<feature type="active site" description="Nucleophile; for GTP cyclohydrolase activity" evidence="1">
    <location>
        <position position="329"/>
    </location>
</feature>
<feature type="binding site" evidence="1">
    <location>
        <begin position="26"/>
        <end position="27"/>
    </location>
    <ligand>
        <name>D-ribulose 5-phosphate</name>
        <dbReference type="ChEBI" id="CHEBI:58121"/>
    </ligand>
</feature>
<feature type="binding site" evidence="1">
    <location>
        <position position="27"/>
    </location>
    <ligand>
        <name>Mg(2+)</name>
        <dbReference type="ChEBI" id="CHEBI:18420"/>
        <label>1</label>
    </ligand>
</feature>
<feature type="binding site" evidence="1">
    <location>
        <position position="27"/>
    </location>
    <ligand>
        <name>Mg(2+)</name>
        <dbReference type="ChEBI" id="CHEBI:18420"/>
        <label>2</label>
    </ligand>
</feature>
<feature type="binding site" evidence="1">
    <location>
        <position position="31"/>
    </location>
    <ligand>
        <name>D-ribulose 5-phosphate</name>
        <dbReference type="ChEBI" id="CHEBI:58121"/>
    </ligand>
</feature>
<feature type="binding site" evidence="1">
    <location>
        <begin position="138"/>
        <end position="142"/>
    </location>
    <ligand>
        <name>D-ribulose 5-phosphate</name>
        <dbReference type="ChEBI" id="CHEBI:58121"/>
    </ligand>
</feature>
<feature type="binding site" evidence="1">
    <location>
        <position position="141"/>
    </location>
    <ligand>
        <name>Mg(2+)</name>
        <dbReference type="ChEBI" id="CHEBI:18420"/>
        <label>2</label>
    </ligand>
</feature>
<feature type="binding site" evidence="1">
    <location>
        <position position="162"/>
    </location>
    <ligand>
        <name>D-ribulose 5-phosphate</name>
        <dbReference type="ChEBI" id="CHEBI:58121"/>
    </ligand>
</feature>
<feature type="binding site" evidence="1">
    <location>
        <begin position="250"/>
        <end position="254"/>
    </location>
    <ligand>
        <name>GTP</name>
        <dbReference type="ChEBI" id="CHEBI:37565"/>
    </ligand>
</feature>
<feature type="binding site" evidence="1">
    <location>
        <position position="255"/>
    </location>
    <ligand>
        <name>Zn(2+)</name>
        <dbReference type="ChEBI" id="CHEBI:29105"/>
        <note>catalytic</note>
    </ligand>
</feature>
<feature type="binding site" evidence="1">
    <location>
        <position position="266"/>
    </location>
    <ligand>
        <name>Zn(2+)</name>
        <dbReference type="ChEBI" id="CHEBI:29105"/>
        <note>catalytic</note>
    </ligand>
</feature>
<feature type="binding site" evidence="1">
    <location>
        <position position="268"/>
    </location>
    <ligand>
        <name>Zn(2+)</name>
        <dbReference type="ChEBI" id="CHEBI:29105"/>
        <note>catalytic</note>
    </ligand>
</feature>
<feature type="binding site" evidence="1">
    <location>
        <position position="271"/>
    </location>
    <ligand>
        <name>GTP</name>
        <dbReference type="ChEBI" id="CHEBI:37565"/>
    </ligand>
</feature>
<feature type="binding site" evidence="1">
    <location>
        <begin position="293"/>
        <end position="295"/>
    </location>
    <ligand>
        <name>GTP</name>
        <dbReference type="ChEBI" id="CHEBI:37565"/>
    </ligand>
</feature>
<feature type="binding site" evidence="1">
    <location>
        <position position="315"/>
    </location>
    <ligand>
        <name>GTP</name>
        <dbReference type="ChEBI" id="CHEBI:37565"/>
    </ligand>
</feature>
<feature type="binding site" evidence="1">
    <location>
        <position position="350"/>
    </location>
    <ligand>
        <name>GTP</name>
        <dbReference type="ChEBI" id="CHEBI:37565"/>
    </ligand>
</feature>
<feature type="binding site" evidence="1">
    <location>
        <position position="355"/>
    </location>
    <ligand>
        <name>GTP</name>
        <dbReference type="ChEBI" id="CHEBI:37565"/>
    </ligand>
</feature>
<feature type="site" description="Essential for DHBP synthase activity" evidence="1">
    <location>
        <position position="124"/>
    </location>
</feature>
<feature type="site" description="Essential for DHBP synthase activity" evidence="1">
    <location>
        <position position="162"/>
    </location>
</feature>
<dbReference type="EC" id="4.1.99.12" evidence="1"/>
<dbReference type="EC" id="3.5.4.25" evidence="1"/>
<dbReference type="EMBL" id="AE017194">
    <property type="protein sequence ID" value="AAS43082.1"/>
    <property type="molecule type" value="Genomic_DNA"/>
</dbReference>
<dbReference type="SMR" id="Q731I5"/>
<dbReference type="KEGG" id="bca:BCE_4181"/>
<dbReference type="HOGENOM" id="CLU_020273_1_2_9"/>
<dbReference type="UniPathway" id="UPA00275">
    <property type="reaction ID" value="UER00399"/>
</dbReference>
<dbReference type="UniPathway" id="UPA00275">
    <property type="reaction ID" value="UER00400"/>
</dbReference>
<dbReference type="Proteomes" id="UP000002527">
    <property type="component" value="Chromosome"/>
</dbReference>
<dbReference type="GO" id="GO:0005829">
    <property type="term" value="C:cytosol"/>
    <property type="evidence" value="ECO:0007669"/>
    <property type="project" value="TreeGrafter"/>
</dbReference>
<dbReference type="GO" id="GO:0008686">
    <property type="term" value="F:3,4-dihydroxy-2-butanone-4-phosphate synthase activity"/>
    <property type="evidence" value="ECO:0007669"/>
    <property type="project" value="UniProtKB-UniRule"/>
</dbReference>
<dbReference type="GO" id="GO:0005525">
    <property type="term" value="F:GTP binding"/>
    <property type="evidence" value="ECO:0007669"/>
    <property type="project" value="UniProtKB-KW"/>
</dbReference>
<dbReference type="GO" id="GO:0003935">
    <property type="term" value="F:GTP cyclohydrolase II activity"/>
    <property type="evidence" value="ECO:0007669"/>
    <property type="project" value="UniProtKB-UniRule"/>
</dbReference>
<dbReference type="GO" id="GO:0000287">
    <property type="term" value="F:magnesium ion binding"/>
    <property type="evidence" value="ECO:0007669"/>
    <property type="project" value="UniProtKB-UniRule"/>
</dbReference>
<dbReference type="GO" id="GO:0030145">
    <property type="term" value="F:manganese ion binding"/>
    <property type="evidence" value="ECO:0007669"/>
    <property type="project" value="UniProtKB-UniRule"/>
</dbReference>
<dbReference type="GO" id="GO:0008270">
    <property type="term" value="F:zinc ion binding"/>
    <property type="evidence" value="ECO:0007669"/>
    <property type="project" value="UniProtKB-UniRule"/>
</dbReference>
<dbReference type="GO" id="GO:0009231">
    <property type="term" value="P:riboflavin biosynthetic process"/>
    <property type="evidence" value="ECO:0007669"/>
    <property type="project" value="UniProtKB-UniRule"/>
</dbReference>
<dbReference type="CDD" id="cd00641">
    <property type="entry name" value="GTP_cyclohydro2"/>
    <property type="match status" value="1"/>
</dbReference>
<dbReference type="FunFam" id="3.40.50.10990:FF:000001">
    <property type="entry name" value="Riboflavin biosynthesis protein RibBA"/>
    <property type="match status" value="1"/>
</dbReference>
<dbReference type="FunFam" id="3.90.870.10:FF:000001">
    <property type="entry name" value="Riboflavin biosynthesis protein RibBA"/>
    <property type="match status" value="1"/>
</dbReference>
<dbReference type="Gene3D" id="3.90.870.10">
    <property type="entry name" value="DHBP synthase"/>
    <property type="match status" value="1"/>
</dbReference>
<dbReference type="Gene3D" id="3.40.50.10990">
    <property type="entry name" value="GTP cyclohydrolase II"/>
    <property type="match status" value="1"/>
</dbReference>
<dbReference type="HAMAP" id="MF_00179">
    <property type="entry name" value="RibA"/>
    <property type="match status" value="1"/>
</dbReference>
<dbReference type="HAMAP" id="MF_00180">
    <property type="entry name" value="RibB"/>
    <property type="match status" value="1"/>
</dbReference>
<dbReference type="HAMAP" id="MF_01283">
    <property type="entry name" value="RibBA"/>
    <property type="match status" value="1"/>
</dbReference>
<dbReference type="InterPro" id="IPR017945">
    <property type="entry name" value="DHBP_synth_RibB-like_a/b_dom"/>
</dbReference>
<dbReference type="InterPro" id="IPR000422">
    <property type="entry name" value="DHBP_synthase_RibB"/>
</dbReference>
<dbReference type="InterPro" id="IPR032677">
    <property type="entry name" value="GTP_cyclohydro_II"/>
</dbReference>
<dbReference type="InterPro" id="IPR000926">
    <property type="entry name" value="RibA"/>
</dbReference>
<dbReference type="InterPro" id="IPR036144">
    <property type="entry name" value="RibA-like_sf"/>
</dbReference>
<dbReference type="InterPro" id="IPR016299">
    <property type="entry name" value="Riboflavin_synth_RibBA"/>
</dbReference>
<dbReference type="NCBIfam" id="NF001591">
    <property type="entry name" value="PRK00393.1"/>
    <property type="match status" value="1"/>
</dbReference>
<dbReference type="NCBIfam" id="NF006803">
    <property type="entry name" value="PRK09311.1"/>
    <property type="match status" value="1"/>
</dbReference>
<dbReference type="NCBIfam" id="TIGR00505">
    <property type="entry name" value="ribA"/>
    <property type="match status" value="1"/>
</dbReference>
<dbReference type="NCBIfam" id="TIGR00506">
    <property type="entry name" value="ribB"/>
    <property type="match status" value="1"/>
</dbReference>
<dbReference type="PANTHER" id="PTHR21327:SF18">
    <property type="entry name" value="3,4-DIHYDROXY-2-BUTANONE 4-PHOSPHATE SYNTHASE"/>
    <property type="match status" value="1"/>
</dbReference>
<dbReference type="PANTHER" id="PTHR21327">
    <property type="entry name" value="GTP CYCLOHYDROLASE II-RELATED"/>
    <property type="match status" value="1"/>
</dbReference>
<dbReference type="Pfam" id="PF00926">
    <property type="entry name" value="DHBP_synthase"/>
    <property type="match status" value="1"/>
</dbReference>
<dbReference type="Pfam" id="PF00925">
    <property type="entry name" value="GTP_cyclohydro2"/>
    <property type="match status" value="1"/>
</dbReference>
<dbReference type="PIRSF" id="PIRSF001259">
    <property type="entry name" value="RibA"/>
    <property type="match status" value="1"/>
</dbReference>
<dbReference type="SUPFAM" id="SSF142695">
    <property type="entry name" value="RibA-like"/>
    <property type="match status" value="1"/>
</dbReference>
<dbReference type="SUPFAM" id="SSF55821">
    <property type="entry name" value="YrdC/RibB"/>
    <property type="match status" value="1"/>
</dbReference>
<comment type="function">
    <text evidence="1">Catalyzes the conversion of D-ribulose 5-phosphate to formate and 3,4-dihydroxy-2-butanone 4-phosphate.</text>
</comment>
<comment type="function">
    <text evidence="1">Catalyzes the conversion of GTP to 2,5-diamino-6-ribosylamino-4(3H)-pyrimidinone 5'-phosphate (DARP), formate and pyrophosphate.</text>
</comment>
<comment type="catalytic activity">
    <reaction evidence="1">
        <text>D-ribulose 5-phosphate = (2S)-2-hydroxy-3-oxobutyl phosphate + formate + H(+)</text>
        <dbReference type="Rhea" id="RHEA:18457"/>
        <dbReference type="ChEBI" id="CHEBI:15378"/>
        <dbReference type="ChEBI" id="CHEBI:15740"/>
        <dbReference type="ChEBI" id="CHEBI:58121"/>
        <dbReference type="ChEBI" id="CHEBI:58830"/>
        <dbReference type="EC" id="4.1.99.12"/>
    </reaction>
</comment>
<comment type="catalytic activity">
    <reaction evidence="1">
        <text>GTP + 4 H2O = 2,5-diamino-6-hydroxy-4-(5-phosphoribosylamino)-pyrimidine + formate + 2 phosphate + 3 H(+)</text>
        <dbReference type="Rhea" id="RHEA:23704"/>
        <dbReference type="ChEBI" id="CHEBI:15377"/>
        <dbReference type="ChEBI" id="CHEBI:15378"/>
        <dbReference type="ChEBI" id="CHEBI:15740"/>
        <dbReference type="ChEBI" id="CHEBI:37565"/>
        <dbReference type="ChEBI" id="CHEBI:43474"/>
        <dbReference type="ChEBI" id="CHEBI:58614"/>
        <dbReference type="EC" id="3.5.4.25"/>
    </reaction>
</comment>
<comment type="cofactor">
    <cofactor evidence="1">
        <name>Mg(2+)</name>
        <dbReference type="ChEBI" id="CHEBI:18420"/>
    </cofactor>
    <cofactor evidence="1">
        <name>Mn(2+)</name>
        <dbReference type="ChEBI" id="CHEBI:29035"/>
    </cofactor>
    <text evidence="1">Binds 2 divalent metal cations per subunit. Magnesium or manganese.</text>
</comment>
<comment type="cofactor">
    <cofactor evidence="1">
        <name>Zn(2+)</name>
        <dbReference type="ChEBI" id="CHEBI:29105"/>
    </cofactor>
    <text evidence="1">Binds 1 zinc ion per subunit.</text>
</comment>
<comment type="pathway">
    <text evidence="1">Cofactor biosynthesis; riboflavin biosynthesis; 2-hydroxy-3-oxobutyl phosphate from D-ribulose 5-phosphate: step 1/1.</text>
</comment>
<comment type="pathway">
    <text evidence="1">Cofactor biosynthesis; riboflavin biosynthesis; 5-amino-6-(D-ribitylamino)uracil from GTP: step 1/4.</text>
</comment>
<comment type="similarity">
    <text evidence="1">In the N-terminal section; belongs to the DHBP synthase family.</text>
</comment>
<comment type="similarity">
    <text evidence="1">In the C-terminal section; belongs to the GTP cyclohydrolase II family.</text>
</comment>
<proteinExistence type="inferred from homology"/>
<accession>Q731I5</accession>
<organism>
    <name type="scientific">Bacillus cereus (strain ATCC 10987 / NRS 248)</name>
    <dbReference type="NCBI Taxonomy" id="222523"/>
    <lineage>
        <taxon>Bacteria</taxon>
        <taxon>Bacillati</taxon>
        <taxon>Bacillota</taxon>
        <taxon>Bacilli</taxon>
        <taxon>Bacillales</taxon>
        <taxon>Bacillaceae</taxon>
        <taxon>Bacillus</taxon>
        <taxon>Bacillus cereus group</taxon>
    </lineage>
</organism>
<keyword id="KW-0342">GTP-binding</keyword>
<keyword id="KW-0378">Hydrolase</keyword>
<keyword id="KW-0456">Lyase</keyword>
<keyword id="KW-0460">Magnesium</keyword>
<keyword id="KW-0464">Manganese</keyword>
<keyword id="KW-0479">Metal-binding</keyword>
<keyword id="KW-0511">Multifunctional enzyme</keyword>
<keyword id="KW-0547">Nucleotide-binding</keyword>
<keyword id="KW-0686">Riboflavin biosynthesis</keyword>
<keyword id="KW-0862">Zinc</keyword>
<protein>
    <recommendedName>
        <fullName evidence="1">Riboflavin biosynthesis protein RibBA</fullName>
    </recommendedName>
    <domain>
        <recommendedName>
            <fullName evidence="1">3,4-dihydroxy-2-butanone 4-phosphate synthase</fullName>
            <shortName evidence="1">DHBP synthase</shortName>
            <ecNumber evidence="1">4.1.99.12</ecNumber>
        </recommendedName>
    </domain>
    <domain>
        <recommendedName>
            <fullName evidence="1">GTP cyclohydrolase-2</fullName>
            <ecNumber evidence="1">3.5.4.25</ecNumber>
        </recommendedName>
        <alternativeName>
            <fullName evidence="1">GTP cyclohydrolase II</fullName>
        </alternativeName>
    </domain>
</protein>
<evidence type="ECO:0000255" key="1">
    <source>
        <dbReference type="HAMAP-Rule" id="MF_01283"/>
    </source>
</evidence>